<name>EFEU_ECOLI</name>
<dbReference type="EMBL" id="U00096">
    <property type="status" value="NOT_ANNOTATED_CDS"/>
    <property type="molecule type" value="Genomic_DNA"/>
</dbReference>
<dbReference type="EMBL" id="AP009048">
    <property type="status" value="NOT_ANNOTATED_CDS"/>
    <property type="molecule type" value="Genomic_DNA"/>
</dbReference>
<dbReference type="FunCoup" id="P75901">
    <property type="interactions" value="65"/>
</dbReference>
<dbReference type="TCDB" id="2.A.108.2.3">
    <property type="family name" value="the iron/lead transporter (ilt) family"/>
</dbReference>
<dbReference type="EchoBASE" id="EB3620"/>
<dbReference type="InParanoid" id="P75901"/>
<dbReference type="PhylomeDB" id="P75901"/>
<dbReference type="Proteomes" id="UP000000625">
    <property type="component" value="Chromosome"/>
</dbReference>
<dbReference type="GO" id="GO:0033573">
    <property type="term" value="C:high-affinity iron permease complex"/>
    <property type="evidence" value="ECO:0007669"/>
    <property type="project" value="InterPro"/>
</dbReference>
<dbReference type="GO" id="GO:0005886">
    <property type="term" value="C:plasma membrane"/>
    <property type="evidence" value="ECO:0000318"/>
    <property type="project" value="GO_Central"/>
</dbReference>
<dbReference type="GO" id="GO:0015093">
    <property type="term" value="F:ferrous iron transmembrane transporter activity"/>
    <property type="evidence" value="ECO:0000318"/>
    <property type="project" value="GO_Central"/>
</dbReference>
<dbReference type="GO" id="GO:0034755">
    <property type="term" value="P:iron ion transmembrane transport"/>
    <property type="evidence" value="ECO:0000318"/>
    <property type="project" value="GO_Central"/>
</dbReference>
<dbReference type="InterPro" id="IPR005217">
    <property type="entry name" value="EfeU/FTR1-like"/>
</dbReference>
<dbReference type="InterPro" id="IPR004923">
    <property type="entry name" value="FTR1/Fip1/EfeU"/>
</dbReference>
<dbReference type="NCBIfam" id="NF041756">
    <property type="entry name" value="EfeU"/>
    <property type="match status" value="1"/>
</dbReference>
<dbReference type="NCBIfam" id="TIGR00145">
    <property type="entry name" value="EfeU/Ftr1 family ferrous iron transporter subunit"/>
    <property type="match status" value="1"/>
</dbReference>
<dbReference type="PANTHER" id="PTHR31632">
    <property type="entry name" value="IRON TRANSPORTER FTH1"/>
    <property type="match status" value="1"/>
</dbReference>
<dbReference type="PANTHER" id="PTHR31632:SF2">
    <property type="entry name" value="PLASMA MEMBRANE IRON PERMEASE"/>
    <property type="match status" value="1"/>
</dbReference>
<dbReference type="Pfam" id="PF03239">
    <property type="entry name" value="FTR1"/>
    <property type="match status" value="1"/>
</dbReference>
<feature type="chain" id="PRO_0000159652" description="Putative inactive ferrous iron permease EfeU">
    <location>
        <begin position="1"/>
        <end position="276"/>
    </location>
</feature>
<feature type="topological domain" description="Periplasmic" evidence="2">
    <location>
        <position position="1"/>
    </location>
</feature>
<feature type="transmembrane region" description="Helical" evidence="2">
    <location>
        <begin position="2"/>
        <end position="22"/>
    </location>
</feature>
<feature type="topological domain" description="Cytoplasmic" evidence="2">
    <location>
        <begin position="23"/>
        <end position="35"/>
    </location>
</feature>
<feature type="transmembrane region" description="Helical" evidence="2">
    <location>
        <begin position="36"/>
        <end position="56"/>
    </location>
</feature>
<feature type="topological domain" description="Periplasmic" evidence="2">
    <location>
        <begin position="57"/>
        <end position="69"/>
    </location>
</feature>
<feature type="transmembrane region" description="Helical" evidence="2">
    <location>
        <begin position="70"/>
        <end position="90"/>
    </location>
</feature>
<feature type="topological domain" description="Cytoplasmic" evidence="2">
    <location>
        <begin position="91"/>
        <end position="118"/>
    </location>
</feature>
<feature type="transmembrane region" description="Helical" evidence="2">
    <location>
        <begin position="119"/>
        <end position="139"/>
    </location>
</feature>
<feature type="topological domain" description="Periplasmic" evidence="2">
    <location>
        <begin position="140"/>
        <end position="147"/>
    </location>
</feature>
<feature type="transmembrane region" description="Helical" evidence="2">
    <location>
        <begin position="148"/>
        <end position="168"/>
    </location>
</feature>
<feature type="topological domain" description="Cytoplasmic" evidence="2">
    <location>
        <begin position="169"/>
        <end position="179"/>
    </location>
</feature>
<feature type="transmembrane region" description="Helical" evidence="2">
    <location>
        <begin position="180"/>
        <end position="200"/>
    </location>
</feature>
<feature type="topological domain" description="Periplasmic" evidence="2">
    <location>
        <begin position="201"/>
        <end position="244"/>
    </location>
</feature>
<feature type="transmembrane region" description="Helical" evidence="2">
    <location>
        <begin position="245"/>
        <end position="265"/>
    </location>
</feature>
<feature type="topological domain" description="Cytoplasmic" evidence="2">
    <location>
        <begin position="266"/>
        <end position="276"/>
    </location>
</feature>
<gene>
    <name type="primary">efeU</name>
    <name type="synonym">ycdN</name>
    <name type="ordered locus">b4490</name>
    <name type="ordered locus">JW5141/JW1002</name>
    <name type="ORF">b1016/b1017</name>
</gene>
<keyword id="KW-0997">Cell inner membrane</keyword>
<keyword id="KW-1003">Cell membrane</keyword>
<keyword id="KW-0472">Membrane</keyword>
<keyword id="KW-1185">Reference proteome</keyword>
<keyword id="KW-0812">Transmembrane</keyword>
<keyword id="KW-1133">Transmembrane helix</keyword>
<accession>P75901</accession>
<accession>P75900</accession>
<accession>Q9R3S6</accession>
<protein>
    <recommendedName>
        <fullName>Putative inactive ferrous iron permease EfeU</fullName>
    </recommendedName>
    <alternativeName>
        <fullName>Putative Fe(2+) ion permease EfeU</fullName>
    </alternativeName>
</protein>
<reference key="1">
    <citation type="journal article" date="1996" name="DNA Res.">
        <title>A 718-kb DNA sequence of the Escherichia coli K-12 genome corresponding to the 12.7-28.0 min region on the linkage map.</title>
        <authorList>
            <person name="Oshima T."/>
            <person name="Aiba H."/>
            <person name="Baba T."/>
            <person name="Fujita K."/>
            <person name="Hayashi K."/>
            <person name="Honjo A."/>
            <person name="Ikemoto K."/>
            <person name="Inada T."/>
            <person name="Itoh T."/>
            <person name="Kajihara M."/>
            <person name="Kanai K."/>
            <person name="Kashimoto K."/>
            <person name="Kimura S."/>
            <person name="Kitagawa M."/>
            <person name="Makino K."/>
            <person name="Masuda S."/>
            <person name="Miki T."/>
            <person name="Mizobuchi K."/>
            <person name="Mori H."/>
            <person name="Motomura K."/>
            <person name="Nakamura Y."/>
            <person name="Nashimoto H."/>
            <person name="Nishio Y."/>
            <person name="Saito N."/>
            <person name="Sampei G."/>
            <person name="Seki Y."/>
            <person name="Tagami H."/>
            <person name="Takemoto K."/>
            <person name="Wada C."/>
            <person name="Yamamoto Y."/>
            <person name="Yano M."/>
            <person name="Horiuchi T."/>
        </authorList>
    </citation>
    <scope>NUCLEOTIDE SEQUENCE [LARGE SCALE GENOMIC DNA]</scope>
    <source>
        <strain>K12 / W3110 / ATCC 27325 / DSM 5911</strain>
    </source>
</reference>
<reference key="2">
    <citation type="journal article" date="1997" name="Science">
        <title>The complete genome sequence of Escherichia coli K-12.</title>
        <authorList>
            <person name="Blattner F.R."/>
            <person name="Plunkett G. III"/>
            <person name="Bloch C.A."/>
            <person name="Perna N.T."/>
            <person name="Burland V."/>
            <person name="Riley M."/>
            <person name="Collado-Vides J."/>
            <person name="Glasner J.D."/>
            <person name="Rode C.K."/>
            <person name="Mayhew G.F."/>
            <person name="Gregor J."/>
            <person name="Davis N.W."/>
            <person name="Kirkpatrick H.A."/>
            <person name="Goeden M.A."/>
            <person name="Rose D.J."/>
            <person name="Mau B."/>
            <person name="Shao Y."/>
        </authorList>
    </citation>
    <scope>NUCLEOTIDE SEQUENCE [LARGE SCALE GENOMIC DNA]</scope>
    <source>
        <strain>K12 / MG1655 / ATCC 47076</strain>
    </source>
</reference>
<reference key="3">
    <citation type="journal article" date="2006" name="Mol. Syst. Biol.">
        <title>Highly accurate genome sequences of Escherichia coli K-12 strains MG1655 and W3110.</title>
        <authorList>
            <person name="Hayashi K."/>
            <person name="Morooka N."/>
            <person name="Yamamoto Y."/>
            <person name="Fujita K."/>
            <person name="Isono K."/>
            <person name="Choi S."/>
            <person name="Ohtsubo E."/>
            <person name="Baba T."/>
            <person name="Wanner B.L."/>
            <person name="Mori H."/>
            <person name="Horiuchi T."/>
        </authorList>
    </citation>
    <scope>NUCLEOTIDE SEQUENCE [LARGE SCALE GENOMIC DNA]</scope>
    <source>
        <strain>K12 / W3110 / ATCC 27325 / DSM 5911</strain>
    </source>
</reference>
<reference key="4">
    <citation type="journal article" date="2007" name="Mol. Microbiol.">
        <title>EfeUOB (YcdNOB) is a tripartite, acid-induced and CpxAR-regulated, low-pH Fe2+ transporter that is cryptic in Escherichia coli K-12 but functional in E. coli O157:H7.</title>
        <authorList>
            <person name="Cao J."/>
            <person name="Woodhall M.R."/>
            <person name="Alvarez J."/>
            <person name="Cartron M.L."/>
            <person name="Andrews S.C."/>
        </authorList>
    </citation>
    <scope>SUBUNIT</scope>
    <scope>LACK OF ACTIVITY IN STRAIN K12</scope>
    <source>
        <strain>K12</strain>
    </source>
</reference>
<organism>
    <name type="scientific">Escherichia coli (strain K12)</name>
    <dbReference type="NCBI Taxonomy" id="83333"/>
    <lineage>
        <taxon>Bacteria</taxon>
        <taxon>Pseudomonadati</taxon>
        <taxon>Pseudomonadota</taxon>
        <taxon>Gammaproteobacteria</taxon>
        <taxon>Enterobacterales</taxon>
        <taxon>Enterobacteriaceae</taxon>
        <taxon>Escherichia</taxon>
    </lineage>
</organism>
<evidence type="ECO:0000250" key="1"/>
<evidence type="ECO:0000255" key="2"/>
<evidence type="ECO:0000269" key="3">
    <source>
    </source>
</evidence>
<evidence type="ECO:0000305" key="4"/>
<proteinExistence type="uncertain"/>
<comment type="subunit">
    <text evidence="3">Part of a ferrous iron transporter composed of EfeU, EfeO and EfeB. However, this EfeUOB tripartite iron transporter is defective in E.coli strain K12 due to a frameshift mutation in EfeU.</text>
</comment>
<comment type="subcellular location">
    <subcellularLocation>
        <location evidence="1">Cell inner membrane</location>
        <topology evidence="1">Multi-pass membrane protein</topology>
    </subcellularLocation>
</comment>
<comment type="similarity">
    <text evidence="4">Belongs to the oxidase-dependent Fe transporter (OFeT) (TC 9.A.10.1) family.</text>
</comment>
<comment type="caution">
    <text evidence="4">Could be the product of a pseudogene. Strain K12 contains a truncated, inactive permease due to a frameshift in position 34 that produces two separate ORFs. The sequence shown here is a reconstruction originating from EcoGene.</text>
</comment>
<comment type="sequence caution" evidence="4">
    <conflict type="frameshift">
        <sequence resource="EMBL" id="AP009048"/>
    </conflict>
</comment>
<comment type="sequence caution" evidence="4">
    <conflict type="frameshift">
        <sequence resource="EMBL" id="U00096"/>
    </conflict>
</comment>
<sequence>MFVPFLIMLREGLEAALIVSLIASYLKRTQRGMXDCVMWIGVLLAAALCLGLGIFINETTGEFPQKEQELFEGIVAVIAVVILTWMVFWMRKVSRNVKVQLEQAVDSALQRGNHHGWALVMMVFFAVAREGLESVFFLLAAFQQDVGIWPPLGAMLGLATAVVLGFLLYWGGIRLNLGAFFKWTSLFILFVAAGLAAGAIRAFHEAGLWNHFQEIAFDMSAVLSTHSLFGTLMEGIFGYQEAPSVSEVAVWFIYLIPALVAFALPPRAGATASRSA</sequence>